<dbReference type="EC" id="3.6.5.3" evidence="2"/>
<dbReference type="EMBL" id="AM167904">
    <property type="protein sequence ID" value="CAJ47590.1"/>
    <property type="molecule type" value="Genomic_DNA"/>
</dbReference>
<dbReference type="EMBL" id="AM167904">
    <property type="protein sequence ID" value="CAJ47607.1"/>
    <property type="molecule type" value="Genomic_DNA"/>
</dbReference>
<dbReference type="RefSeq" id="WP_012415717.1">
    <property type="nucleotide sequence ID" value="NC_010645.1"/>
</dbReference>
<dbReference type="SMR" id="Q2L2G6"/>
<dbReference type="STRING" id="360910.BAV0006"/>
<dbReference type="GeneID" id="92936750"/>
<dbReference type="KEGG" id="bav:BAV0006"/>
<dbReference type="KEGG" id="bav:BAV0023"/>
<dbReference type="eggNOG" id="COG0050">
    <property type="taxonomic scope" value="Bacteria"/>
</dbReference>
<dbReference type="HOGENOM" id="CLU_007265_0_0_4"/>
<dbReference type="OrthoDB" id="9803139at2"/>
<dbReference type="Proteomes" id="UP000001977">
    <property type="component" value="Chromosome"/>
</dbReference>
<dbReference type="GO" id="GO:0005829">
    <property type="term" value="C:cytosol"/>
    <property type="evidence" value="ECO:0007669"/>
    <property type="project" value="TreeGrafter"/>
</dbReference>
<dbReference type="GO" id="GO:0005525">
    <property type="term" value="F:GTP binding"/>
    <property type="evidence" value="ECO:0007669"/>
    <property type="project" value="UniProtKB-UniRule"/>
</dbReference>
<dbReference type="GO" id="GO:0003924">
    <property type="term" value="F:GTPase activity"/>
    <property type="evidence" value="ECO:0007669"/>
    <property type="project" value="InterPro"/>
</dbReference>
<dbReference type="GO" id="GO:0097216">
    <property type="term" value="F:guanosine tetraphosphate binding"/>
    <property type="evidence" value="ECO:0007669"/>
    <property type="project" value="UniProtKB-ARBA"/>
</dbReference>
<dbReference type="GO" id="GO:0003746">
    <property type="term" value="F:translation elongation factor activity"/>
    <property type="evidence" value="ECO:0007669"/>
    <property type="project" value="UniProtKB-UniRule"/>
</dbReference>
<dbReference type="CDD" id="cd01884">
    <property type="entry name" value="EF_Tu"/>
    <property type="match status" value="1"/>
</dbReference>
<dbReference type="CDD" id="cd03697">
    <property type="entry name" value="EFTU_II"/>
    <property type="match status" value="1"/>
</dbReference>
<dbReference type="CDD" id="cd03707">
    <property type="entry name" value="EFTU_III"/>
    <property type="match status" value="1"/>
</dbReference>
<dbReference type="FunFam" id="2.40.30.10:FF:000001">
    <property type="entry name" value="Elongation factor Tu"/>
    <property type="match status" value="1"/>
</dbReference>
<dbReference type="FunFam" id="3.40.50.300:FF:000003">
    <property type="entry name" value="Elongation factor Tu"/>
    <property type="match status" value="1"/>
</dbReference>
<dbReference type="Gene3D" id="3.40.50.300">
    <property type="entry name" value="P-loop containing nucleotide triphosphate hydrolases"/>
    <property type="match status" value="1"/>
</dbReference>
<dbReference type="Gene3D" id="2.40.30.10">
    <property type="entry name" value="Translation factors"/>
    <property type="match status" value="2"/>
</dbReference>
<dbReference type="HAMAP" id="MF_00118_B">
    <property type="entry name" value="EF_Tu_B"/>
    <property type="match status" value="1"/>
</dbReference>
<dbReference type="InterPro" id="IPR041709">
    <property type="entry name" value="EF-Tu_GTP-bd"/>
</dbReference>
<dbReference type="InterPro" id="IPR050055">
    <property type="entry name" value="EF-Tu_GTPase"/>
</dbReference>
<dbReference type="InterPro" id="IPR004161">
    <property type="entry name" value="EFTu-like_2"/>
</dbReference>
<dbReference type="InterPro" id="IPR033720">
    <property type="entry name" value="EFTU_2"/>
</dbReference>
<dbReference type="InterPro" id="IPR031157">
    <property type="entry name" value="G_TR_CS"/>
</dbReference>
<dbReference type="InterPro" id="IPR027417">
    <property type="entry name" value="P-loop_NTPase"/>
</dbReference>
<dbReference type="InterPro" id="IPR005225">
    <property type="entry name" value="Small_GTP-bd"/>
</dbReference>
<dbReference type="InterPro" id="IPR000795">
    <property type="entry name" value="T_Tr_GTP-bd_dom"/>
</dbReference>
<dbReference type="InterPro" id="IPR009000">
    <property type="entry name" value="Transl_B-barrel_sf"/>
</dbReference>
<dbReference type="InterPro" id="IPR009001">
    <property type="entry name" value="Transl_elong_EF1A/Init_IF2_C"/>
</dbReference>
<dbReference type="InterPro" id="IPR004541">
    <property type="entry name" value="Transl_elong_EFTu/EF1A_bac/org"/>
</dbReference>
<dbReference type="InterPro" id="IPR004160">
    <property type="entry name" value="Transl_elong_EFTu/EF1A_C"/>
</dbReference>
<dbReference type="NCBIfam" id="TIGR00485">
    <property type="entry name" value="EF-Tu"/>
    <property type="match status" value="1"/>
</dbReference>
<dbReference type="NCBIfam" id="NF000766">
    <property type="entry name" value="PRK00049.1"/>
    <property type="match status" value="1"/>
</dbReference>
<dbReference type="NCBIfam" id="NF009372">
    <property type="entry name" value="PRK12735.1"/>
    <property type="match status" value="1"/>
</dbReference>
<dbReference type="NCBIfam" id="NF009373">
    <property type="entry name" value="PRK12736.1"/>
    <property type="match status" value="1"/>
</dbReference>
<dbReference type="NCBIfam" id="TIGR00231">
    <property type="entry name" value="small_GTP"/>
    <property type="match status" value="1"/>
</dbReference>
<dbReference type="PANTHER" id="PTHR43721:SF22">
    <property type="entry name" value="ELONGATION FACTOR TU, MITOCHONDRIAL"/>
    <property type="match status" value="1"/>
</dbReference>
<dbReference type="PANTHER" id="PTHR43721">
    <property type="entry name" value="ELONGATION FACTOR TU-RELATED"/>
    <property type="match status" value="1"/>
</dbReference>
<dbReference type="Pfam" id="PF00009">
    <property type="entry name" value="GTP_EFTU"/>
    <property type="match status" value="1"/>
</dbReference>
<dbReference type="Pfam" id="PF03144">
    <property type="entry name" value="GTP_EFTU_D2"/>
    <property type="match status" value="1"/>
</dbReference>
<dbReference type="Pfam" id="PF03143">
    <property type="entry name" value="GTP_EFTU_D3"/>
    <property type="match status" value="1"/>
</dbReference>
<dbReference type="PRINTS" id="PR00315">
    <property type="entry name" value="ELONGATNFCT"/>
</dbReference>
<dbReference type="SUPFAM" id="SSF50465">
    <property type="entry name" value="EF-Tu/eEF-1alpha/eIF2-gamma C-terminal domain"/>
    <property type="match status" value="1"/>
</dbReference>
<dbReference type="SUPFAM" id="SSF52540">
    <property type="entry name" value="P-loop containing nucleoside triphosphate hydrolases"/>
    <property type="match status" value="1"/>
</dbReference>
<dbReference type="SUPFAM" id="SSF50447">
    <property type="entry name" value="Translation proteins"/>
    <property type="match status" value="1"/>
</dbReference>
<dbReference type="PROSITE" id="PS00301">
    <property type="entry name" value="G_TR_1"/>
    <property type="match status" value="1"/>
</dbReference>
<dbReference type="PROSITE" id="PS51722">
    <property type="entry name" value="G_TR_2"/>
    <property type="match status" value="1"/>
</dbReference>
<evidence type="ECO:0000250" key="1"/>
<evidence type="ECO:0000255" key="2">
    <source>
        <dbReference type="HAMAP-Rule" id="MF_00118"/>
    </source>
</evidence>
<protein>
    <recommendedName>
        <fullName evidence="2">Elongation factor Tu</fullName>
        <shortName evidence="2">EF-Tu</shortName>
        <ecNumber evidence="2">3.6.5.3</ecNumber>
    </recommendedName>
</protein>
<reference key="1">
    <citation type="journal article" date="2006" name="J. Bacteriol.">
        <title>Comparison of the genome sequence of the poultry pathogen Bordetella avium with those of B. bronchiseptica, B. pertussis, and B. parapertussis reveals extensive diversity in surface structures associated with host interaction.</title>
        <authorList>
            <person name="Sebaihia M."/>
            <person name="Preston A."/>
            <person name="Maskell D.J."/>
            <person name="Kuzmiak H."/>
            <person name="Connell T.D."/>
            <person name="King N.D."/>
            <person name="Orndorff P.E."/>
            <person name="Miyamoto D.M."/>
            <person name="Thomson N.R."/>
            <person name="Harris D."/>
            <person name="Goble A."/>
            <person name="Lord A."/>
            <person name="Murphy L."/>
            <person name="Quail M.A."/>
            <person name="Rutter S."/>
            <person name="Squares R."/>
            <person name="Squares S."/>
            <person name="Woodward J."/>
            <person name="Parkhill J."/>
            <person name="Temple L.M."/>
        </authorList>
    </citation>
    <scope>NUCLEOTIDE SEQUENCE [LARGE SCALE GENOMIC DNA]</scope>
    <source>
        <strain>197N</strain>
    </source>
</reference>
<gene>
    <name evidence="2" type="primary">tuf1</name>
    <name type="ordered locus">BAV0006</name>
</gene>
<gene>
    <name evidence="2" type="primary">tuf2</name>
    <name type="ordered locus">BAV0023</name>
</gene>
<organism>
    <name type="scientific">Bordetella avium (strain 197N)</name>
    <dbReference type="NCBI Taxonomy" id="360910"/>
    <lineage>
        <taxon>Bacteria</taxon>
        <taxon>Pseudomonadati</taxon>
        <taxon>Pseudomonadota</taxon>
        <taxon>Betaproteobacteria</taxon>
        <taxon>Burkholderiales</taxon>
        <taxon>Alcaligenaceae</taxon>
        <taxon>Bordetella</taxon>
    </lineage>
</organism>
<sequence length="396" mass="42903">MAKGKFERTKPHVNVGTIGHVDHGKTTLTAAITTVLSTKFGGEARGYDQIDAAPEEKARGITINTAHVEYETESRHYAHVDCPGHADYVKNMITGAAQMDGAILVVSAADGPMPQTREHILLSRQVGVPYIIVFLNKADMVDDAELLELVEMEVRELLSKYDFPGDDTPIVKGSAKLALEGDKGELGEQAILSLAAALDTYIPTPERAVDGSFLMPVEDVFSISGRGTVVTGRIERGVVKVGEEIEIVGIKPTVKTTCTGVEMFRKLLDQGQAGDNVGILLRGTKREDVERGQVLAKPGSINPHTDFTAEVYILSKEEGGRHTPFFNGYRPQFYFRTTDVTGTIDLPQDKEMVLPGDNVTMTVKLLAPIAMEEGLRFAIREGGRTVGAGVVAKILK</sequence>
<keyword id="KW-0963">Cytoplasm</keyword>
<keyword id="KW-0251">Elongation factor</keyword>
<keyword id="KW-0342">GTP-binding</keyword>
<keyword id="KW-0378">Hydrolase</keyword>
<keyword id="KW-0460">Magnesium</keyword>
<keyword id="KW-0479">Metal-binding</keyword>
<keyword id="KW-0547">Nucleotide-binding</keyword>
<keyword id="KW-0648">Protein biosynthesis</keyword>
<keyword id="KW-1185">Reference proteome</keyword>
<proteinExistence type="inferred from homology"/>
<accession>Q2L2G6</accession>
<name>EFTU_BORA1</name>
<feature type="chain" id="PRO_0000337326" description="Elongation factor Tu">
    <location>
        <begin position="1"/>
        <end position="396"/>
    </location>
</feature>
<feature type="domain" description="tr-type G">
    <location>
        <begin position="10"/>
        <end position="206"/>
    </location>
</feature>
<feature type="region of interest" description="G1" evidence="1">
    <location>
        <begin position="19"/>
        <end position="26"/>
    </location>
</feature>
<feature type="region of interest" description="G2" evidence="1">
    <location>
        <begin position="60"/>
        <end position="64"/>
    </location>
</feature>
<feature type="region of interest" description="G3" evidence="1">
    <location>
        <begin position="81"/>
        <end position="84"/>
    </location>
</feature>
<feature type="region of interest" description="G4" evidence="1">
    <location>
        <begin position="136"/>
        <end position="139"/>
    </location>
</feature>
<feature type="region of interest" description="G5" evidence="1">
    <location>
        <begin position="174"/>
        <end position="176"/>
    </location>
</feature>
<feature type="binding site" evidence="2">
    <location>
        <begin position="19"/>
        <end position="26"/>
    </location>
    <ligand>
        <name>GTP</name>
        <dbReference type="ChEBI" id="CHEBI:37565"/>
    </ligand>
</feature>
<feature type="binding site" evidence="2">
    <location>
        <position position="26"/>
    </location>
    <ligand>
        <name>Mg(2+)</name>
        <dbReference type="ChEBI" id="CHEBI:18420"/>
    </ligand>
</feature>
<feature type="binding site" evidence="2">
    <location>
        <begin position="81"/>
        <end position="85"/>
    </location>
    <ligand>
        <name>GTP</name>
        <dbReference type="ChEBI" id="CHEBI:37565"/>
    </ligand>
</feature>
<feature type="binding site" evidence="2">
    <location>
        <begin position="136"/>
        <end position="139"/>
    </location>
    <ligand>
        <name>GTP</name>
        <dbReference type="ChEBI" id="CHEBI:37565"/>
    </ligand>
</feature>
<comment type="function">
    <text evidence="2">GTP hydrolase that promotes the GTP-dependent binding of aminoacyl-tRNA to the A-site of ribosomes during protein biosynthesis.</text>
</comment>
<comment type="catalytic activity">
    <reaction evidence="2">
        <text>GTP + H2O = GDP + phosphate + H(+)</text>
        <dbReference type="Rhea" id="RHEA:19669"/>
        <dbReference type="ChEBI" id="CHEBI:15377"/>
        <dbReference type="ChEBI" id="CHEBI:15378"/>
        <dbReference type="ChEBI" id="CHEBI:37565"/>
        <dbReference type="ChEBI" id="CHEBI:43474"/>
        <dbReference type="ChEBI" id="CHEBI:58189"/>
        <dbReference type="EC" id="3.6.5.3"/>
    </reaction>
    <physiologicalReaction direction="left-to-right" evidence="2">
        <dbReference type="Rhea" id="RHEA:19670"/>
    </physiologicalReaction>
</comment>
<comment type="subunit">
    <text evidence="2">Monomer.</text>
</comment>
<comment type="subcellular location">
    <subcellularLocation>
        <location evidence="2">Cytoplasm</location>
    </subcellularLocation>
</comment>
<comment type="similarity">
    <text evidence="2">Belongs to the TRAFAC class translation factor GTPase superfamily. Classic translation factor GTPase family. EF-Tu/EF-1A subfamily.</text>
</comment>